<name>GATA_HAHCH</name>
<reference key="1">
    <citation type="journal article" date="2005" name="Nucleic Acids Res.">
        <title>Genomic blueprint of Hahella chejuensis, a marine microbe producing an algicidal agent.</title>
        <authorList>
            <person name="Jeong H."/>
            <person name="Yim J.H."/>
            <person name="Lee C."/>
            <person name="Choi S.-H."/>
            <person name="Park Y.K."/>
            <person name="Yoon S.H."/>
            <person name="Hur C.-G."/>
            <person name="Kang H.-Y."/>
            <person name="Kim D."/>
            <person name="Lee H.H."/>
            <person name="Park K.H."/>
            <person name="Park S.-H."/>
            <person name="Park H.-S."/>
            <person name="Lee H.K."/>
            <person name="Oh T.K."/>
            <person name="Kim J.F."/>
        </authorList>
    </citation>
    <scope>NUCLEOTIDE SEQUENCE [LARGE SCALE GENOMIC DNA]</scope>
    <source>
        <strain>KCTC 2396</strain>
    </source>
</reference>
<accession>Q2SBG5</accession>
<sequence length="484" mass="52291">MLPHTISEIISGLRDKQFSSREITQDYLARIKRLNPELNCFITVTEDLALSQAEQADARLNAGQTSVLNGVPLAHKDVFCTEGVTTTCGSRMLEKFVPPYESTVTRKFIDAGAVTLGKTNMDEFAMGSSNENSYFGPVRNPWDTERAPGGSSGGSAAAVAAGLCAAATGTDTGGSIRQPAAFCGLTGLKPTYGRVSRLGMVAFASSLDQGGPFARTAEDAALLLNVMAGHDPMDSTSALNPTEDYTSALAQPLAGVTIGLPKEYFSNQLNAEVEKALQEAIKVYESLGASFKEVSLPHTELSVPAYYVIAPAECSTNLSRFDGVRYGHRCENPKDLEDLYQRSRSEGFGDEVKRRILIGTYALSAGYYDAYYRQAQKIRRLIKNDFVSALNEVDALLCPTTPDVAFRLGEKTSDPVQMYLEDIFTIPASLAGLPALGLPCGFKGGLPVGMQLIGNYFTEARLLNLGHQYQLNTDWHKRSPALGE</sequence>
<dbReference type="EC" id="6.3.5.7" evidence="1"/>
<dbReference type="EMBL" id="CP000155">
    <property type="protein sequence ID" value="ABC32009.1"/>
    <property type="molecule type" value="Genomic_DNA"/>
</dbReference>
<dbReference type="RefSeq" id="WP_011399073.1">
    <property type="nucleotide sequence ID" value="NC_007645.1"/>
</dbReference>
<dbReference type="SMR" id="Q2SBG5"/>
<dbReference type="STRING" id="349521.HCH_05337"/>
<dbReference type="KEGG" id="hch:HCH_05337"/>
<dbReference type="eggNOG" id="COG0154">
    <property type="taxonomic scope" value="Bacteria"/>
</dbReference>
<dbReference type="HOGENOM" id="CLU_009600_0_3_6"/>
<dbReference type="OrthoDB" id="8872210at2"/>
<dbReference type="Proteomes" id="UP000000238">
    <property type="component" value="Chromosome"/>
</dbReference>
<dbReference type="GO" id="GO:0030956">
    <property type="term" value="C:glutamyl-tRNA(Gln) amidotransferase complex"/>
    <property type="evidence" value="ECO:0007669"/>
    <property type="project" value="InterPro"/>
</dbReference>
<dbReference type="GO" id="GO:0005524">
    <property type="term" value="F:ATP binding"/>
    <property type="evidence" value="ECO:0007669"/>
    <property type="project" value="UniProtKB-KW"/>
</dbReference>
<dbReference type="GO" id="GO:0050567">
    <property type="term" value="F:glutaminyl-tRNA synthase (glutamine-hydrolyzing) activity"/>
    <property type="evidence" value="ECO:0007669"/>
    <property type="project" value="UniProtKB-UniRule"/>
</dbReference>
<dbReference type="GO" id="GO:0006412">
    <property type="term" value="P:translation"/>
    <property type="evidence" value="ECO:0007669"/>
    <property type="project" value="UniProtKB-UniRule"/>
</dbReference>
<dbReference type="Gene3D" id="3.90.1300.10">
    <property type="entry name" value="Amidase signature (AS) domain"/>
    <property type="match status" value="1"/>
</dbReference>
<dbReference type="HAMAP" id="MF_00120">
    <property type="entry name" value="GatA"/>
    <property type="match status" value="1"/>
</dbReference>
<dbReference type="InterPro" id="IPR000120">
    <property type="entry name" value="Amidase"/>
</dbReference>
<dbReference type="InterPro" id="IPR020556">
    <property type="entry name" value="Amidase_CS"/>
</dbReference>
<dbReference type="InterPro" id="IPR023631">
    <property type="entry name" value="Amidase_dom"/>
</dbReference>
<dbReference type="InterPro" id="IPR036928">
    <property type="entry name" value="AS_sf"/>
</dbReference>
<dbReference type="InterPro" id="IPR004412">
    <property type="entry name" value="GatA"/>
</dbReference>
<dbReference type="NCBIfam" id="TIGR00132">
    <property type="entry name" value="gatA"/>
    <property type="match status" value="1"/>
</dbReference>
<dbReference type="PANTHER" id="PTHR11895:SF151">
    <property type="entry name" value="GLUTAMYL-TRNA(GLN) AMIDOTRANSFERASE SUBUNIT A"/>
    <property type="match status" value="1"/>
</dbReference>
<dbReference type="PANTHER" id="PTHR11895">
    <property type="entry name" value="TRANSAMIDASE"/>
    <property type="match status" value="1"/>
</dbReference>
<dbReference type="Pfam" id="PF01425">
    <property type="entry name" value="Amidase"/>
    <property type="match status" value="1"/>
</dbReference>
<dbReference type="SUPFAM" id="SSF75304">
    <property type="entry name" value="Amidase signature (AS) enzymes"/>
    <property type="match status" value="1"/>
</dbReference>
<dbReference type="PROSITE" id="PS00571">
    <property type="entry name" value="AMIDASES"/>
    <property type="match status" value="1"/>
</dbReference>
<comment type="function">
    <text evidence="1">Allows the formation of correctly charged Gln-tRNA(Gln) through the transamidation of misacylated Glu-tRNA(Gln) in organisms which lack glutaminyl-tRNA synthetase. The reaction takes place in the presence of glutamine and ATP through an activated gamma-phospho-Glu-tRNA(Gln).</text>
</comment>
<comment type="catalytic activity">
    <reaction evidence="1">
        <text>L-glutamyl-tRNA(Gln) + L-glutamine + ATP + H2O = L-glutaminyl-tRNA(Gln) + L-glutamate + ADP + phosphate + H(+)</text>
        <dbReference type="Rhea" id="RHEA:17521"/>
        <dbReference type="Rhea" id="RHEA-COMP:9681"/>
        <dbReference type="Rhea" id="RHEA-COMP:9684"/>
        <dbReference type="ChEBI" id="CHEBI:15377"/>
        <dbReference type="ChEBI" id="CHEBI:15378"/>
        <dbReference type="ChEBI" id="CHEBI:29985"/>
        <dbReference type="ChEBI" id="CHEBI:30616"/>
        <dbReference type="ChEBI" id="CHEBI:43474"/>
        <dbReference type="ChEBI" id="CHEBI:58359"/>
        <dbReference type="ChEBI" id="CHEBI:78520"/>
        <dbReference type="ChEBI" id="CHEBI:78521"/>
        <dbReference type="ChEBI" id="CHEBI:456216"/>
        <dbReference type="EC" id="6.3.5.7"/>
    </reaction>
</comment>
<comment type="subunit">
    <text evidence="1">Heterotrimer of A, B and C subunits.</text>
</comment>
<comment type="similarity">
    <text evidence="1">Belongs to the amidase family. GatA subfamily.</text>
</comment>
<proteinExistence type="inferred from homology"/>
<keyword id="KW-0067">ATP-binding</keyword>
<keyword id="KW-0436">Ligase</keyword>
<keyword id="KW-0547">Nucleotide-binding</keyword>
<keyword id="KW-0648">Protein biosynthesis</keyword>
<keyword id="KW-1185">Reference proteome</keyword>
<gene>
    <name evidence="1" type="primary">gatA</name>
    <name type="ordered locus">HCH_05337</name>
</gene>
<evidence type="ECO:0000255" key="1">
    <source>
        <dbReference type="HAMAP-Rule" id="MF_00120"/>
    </source>
</evidence>
<protein>
    <recommendedName>
        <fullName evidence="1">Glutamyl-tRNA(Gln) amidotransferase subunit A</fullName>
        <shortName evidence="1">Glu-ADT subunit A</shortName>
        <ecNumber evidence="1">6.3.5.7</ecNumber>
    </recommendedName>
</protein>
<feature type="chain" id="PRO_0000241108" description="Glutamyl-tRNA(Gln) amidotransferase subunit A">
    <location>
        <begin position="1"/>
        <end position="484"/>
    </location>
</feature>
<feature type="active site" description="Charge relay system" evidence="1">
    <location>
        <position position="76"/>
    </location>
</feature>
<feature type="active site" description="Charge relay system" evidence="1">
    <location>
        <position position="151"/>
    </location>
</feature>
<feature type="active site" description="Acyl-ester intermediate" evidence="1">
    <location>
        <position position="175"/>
    </location>
</feature>
<organism>
    <name type="scientific">Hahella chejuensis (strain KCTC 2396)</name>
    <dbReference type="NCBI Taxonomy" id="349521"/>
    <lineage>
        <taxon>Bacteria</taxon>
        <taxon>Pseudomonadati</taxon>
        <taxon>Pseudomonadota</taxon>
        <taxon>Gammaproteobacteria</taxon>
        <taxon>Oceanospirillales</taxon>
        <taxon>Hahellaceae</taxon>
        <taxon>Hahella</taxon>
    </lineage>
</organism>